<keyword id="KW-0539">Nucleus</keyword>
<keyword id="KW-1185">Reference proteome</keyword>
<keyword id="KW-0690">Ribosome biogenesis</keyword>
<keyword id="KW-0694">RNA-binding</keyword>
<accession>Q503P2</accession>
<organism>
    <name type="scientific">Danio rerio</name>
    <name type="common">Zebrafish</name>
    <name type="synonym">Brachydanio rerio</name>
    <dbReference type="NCBI Taxonomy" id="7955"/>
    <lineage>
        <taxon>Eukaryota</taxon>
        <taxon>Metazoa</taxon>
        <taxon>Chordata</taxon>
        <taxon>Craniata</taxon>
        <taxon>Vertebrata</taxon>
        <taxon>Euteleostomi</taxon>
        <taxon>Actinopterygii</taxon>
        <taxon>Neopterygii</taxon>
        <taxon>Teleostei</taxon>
        <taxon>Ostariophysi</taxon>
        <taxon>Cypriniformes</taxon>
        <taxon>Danionidae</taxon>
        <taxon>Danioninae</taxon>
        <taxon>Danio</taxon>
    </lineage>
</organism>
<evidence type="ECO:0000250" key="1"/>
<evidence type="ECO:0000255" key="2">
    <source>
        <dbReference type="PROSITE-ProRule" id="PRU00161"/>
    </source>
</evidence>
<evidence type="ECO:0000305" key="3"/>
<protein>
    <recommendedName>
        <fullName>60S ribosome subunit biogenesis protein NIP7 homolog</fullName>
    </recommendedName>
</protein>
<dbReference type="EMBL" id="BC095238">
    <property type="protein sequence ID" value="AAH95238.1"/>
    <property type="molecule type" value="mRNA"/>
</dbReference>
<dbReference type="RefSeq" id="NP_001018426.1">
    <property type="nucleotide sequence ID" value="NM_001020590.1"/>
</dbReference>
<dbReference type="SMR" id="Q503P2"/>
<dbReference type="FunCoup" id="Q503P2">
    <property type="interactions" value="1415"/>
</dbReference>
<dbReference type="STRING" id="7955.ENSDARP00000076524"/>
<dbReference type="PaxDb" id="7955-ENSDARP00000076524"/>
<dbReference type="Ensembl" id="ENSDART00000082087">
    <property type="protein sequence ID" value="ENSDARP00000076524"/>
    <property type="gene ID" value="ENSDARG00000059075"/>
</dbReference>
<dbReference type="GeneID" id="553616"/>
<dbReference type="KEGG" id="dre:553616"/>
<dbReference type="AGR" id="ZFIN:ZDB-GENE-050522-256"/>
<dbReference type="CTD" id="51388"/>
<dbReference type="ZFIN" id="ZDB-GENE-050522-256">
    <property type="gene designation" value="nip7"/>
</dbReference>
<dbReference type="eggNOG" id="KOG3492">
    <property type="taxonomic scope" value="Eukaryota"/>
</dbReference>
<dbReference type="HOGENOM" id="CLU_097217_0_0_1"/>
<dbReference type="InParanoid" id="Q503P2"/>
<dbReference type="OMA" id="LISMGTC"/>
<dbReference type="OrthoDB" id="27490at2759"/>
<dbReference type="PhylomeDB" id="Q503P2"/>
<dbReference type="TreeFam" id="TF300081"/>
<dbReference type="PRO" id="PR:Q503P2"/>
<dbReference type="Proteomes" id="UP000000437">
    <property type="component" value="Chromosome 18"/>
</dbReference>
<dbReference type="Bgee" id="ENSDARG00000059075">
    <property type="expression patterns" value="Expressed in presomitic mesoderm and 38 other cell types or tissues"/>
</dbReference>
<dbReference type="ExpressionAtlas" id="Q503P2">
    <property type="expression patterns" value="baseline and differential"/>
</dbReference>
<dbReference type="GO" id="GO:0005730">
    <property type="term" value="C:nucleolus"/>
    <property type="evidence" value="ECO:0000318"/>
    <property type="project" value="GO_Central"/>
</dbReference>
<dbReference type="GO" id="GO:0030687">
    <property type="term" value="C:preribosome, large subunit precursor"/>
    <property type="evidence" value="ECO:0000318"/>
    <property type="project" value="GO_Central"/>
</dbReference>
<dbReference type="GO" id="GO:0003723">
    <property type="term" value="F:RNA binding"/>
    <property type="evidence" value="ECO:0007669"/>
    <property type="project" value="UniProtKB-KW"/>
</dbReference>
<dbReference type="GO" id="GO:0042273">
    <property type="term" value="P:ribosomal large subunit biogenesis"/>
    <property type="evidence" value="ECO:0000318"/>
    <property type="project" value="GO_Central"/>
</dbReference>
<dbReference type="GO" id="GO:0042255">
    <property type="term" value="P:ribosome assembly"/>
    <property type="evidence" value="ECO:0007669"/>
    <property type="project" value="InterPro"/>
</dbReference>
<dbReference type="CDD" id="cd21146">
    <property type="entry name" value="Nip7_N_euk"/>
    <property type="match status" value="1"/>
</dbReference>
<dbReference type="CDD" id="cd21151">
    <property type="entry name" value="PUA_Nip7-like"/>
    <property type="match status" value="1"/>
</dbReference>
<dbReference type="FunFam" id="2.30.130.10:FF:000002">
    <property type="entry name" value="60S ribosome subunit biogenesis protein NIP7 homolog"/>
    <property type="match status" value="1"/>
</dbReference>
<dbReference type="FunFam" id="3.10.450.220:FF:000001">
    <property type="entry name" value="60S ribosome subunit biogenesis protein NIP7 homolog"/>
    <property type="match status" value="1"/>
</dbReference>
<dbReference type="Gene3D" id="3.10.450.220">
    <property type="match status" value="1"/>
</dbReference>
<dbReference type="Gene3D" id="2.30.130.10">
    <property type="entry name" value="PUA domain"/>
    <property type="match status" value="1"/>
</dbReference>
<dbReference type="InterPro" id="IPR040598">
    <property type="entry name" value="NIP7_N"/>
</dbReference>
<dbReference type="InterPro" id="IPR055359">
    <property type="entry name" value="Nip7_N_euk"/>
</dbReference>
<dbReference type="InterPro" id="IPR002478">
    <property type="entry name" value="PUA"/>
</dbReference>
<dbReference type="InterPro" id="IPR015947">
    <property type="entry name" value="PUA-like_sf"/>
</dbReference>
<dbReference type="InterPro" id="IPR036974">
    <property type="entry name" value="PUA_sf"/>
</dbReference>
<dbReference type="InterPro" id="IPR016686">
    <property type="entry name" value="Ribosomal_synth_fac_NIP7"/>
</dbReference>
<dbReference type="InterPro" id="IPR005155">
    <property type="entry name" value="UPF0113_PUA"/>
</dbReference>
<dbReference type="PANTHER" id="PTHR23415">
    <property type="entry name" value="CYCLIN-DEPENDENT KINASES REGULATORY SUBUNIT/60S RIBOSOME SUBUNIT BIOGENESIS PROTEIN NIP7"/>
    <property type="match status" value="1"/>
</dbReference>
<dbReference type="Pfam" id="PF17833">
    <property type="entry name" value="pre-PUA_NIP7"/>
    <property type="match status" value="1"/>
</dbReference>
<dbReference type="Pfam" id="PF03657">
    <property type="entry name" value="UPF0113"/>
    <property type="match status" value="1"/>
</dbReference>
<dbReference type="PIRSF" id="PIRSF017190">
    <property type="entry name" value="Rbsml_synth_fac_NIP7"/>
    <property type="match status" value="1"/>
</dbReference>
<dbReference type="SMART" id="SM00359">
    <property type="entry name" value="PUA"/>
    <property type="match status" value="1"/>
</dbReference>
<dbReference type="SUPFAM" id="SSF88802">
    <property type="entry name" value="Pre-PUA domain"/>
    <property type="match status" value="1"/>
</dbReference>
<dbReference type="SUPFAM" id="SSF88697">
    <property type="entry name" value="PUA domain-like"/>
    <property type="match status" value="1"/>
</dbReference>
<dbReference type="PROSITE" id="PS50890">
    <property type="entry name" value="PUA"/>
    <property type="match status" value="1"/>
</dbReference>
<reference key="1">
    <citation type="submission" date="2005-05" db="EMBL/GenBank/DDBJ databases">
        <authorList>
            <consortium name="NIH - Zebrafish Gene Collection (ZGC) project"/>
        </authorList>
    </citation>
    <scope>NUCLEOTIDE SEQUENCE [LARGE SCALE MRNA]</scope>
    <source>
        <tissue>Liver</tissue>
    </source>
</reference>
<comment type="function">
    <text evidence="1">Required for proper 34S pre-rRNA processing and 60S ribosome subunit assembly.</text>
</comment>
<comment type="subunit">
    <text evidence="1">Monomer. Interacts with pre-ribosome complex. May bind to RNA. Interacts with NOL8. Interacts with FTSJ3 (By similarity).</text>
</comment>
<comment type="subcellular location">
    <subcellularLocation>
        <location evidence="1">Nucleus</location>
        <location evidence="1">Nucleolus</location>
    </subcellularLocation>
</comment>
<comment type="similarity">
    <text evidence="3">Belongs to the NIP7 family.</text>
</comment>
<sequence>MRPLTDEETKTMFEKLSKYIGENIKLLIDRPDGTYCFRLHNDRVYYMSEKILKLATNVSRDKLVSVGTCFGKFTKTQKFRLHITALDFLAPYAKFKVWVKPGSEQSFLYGNHIMKSGLGRITENTDKYQGVLVYSMADVPLGFGVAARTTQECRKVDPMAIVVFHQADIGEYIRSEDTLT</sequence>
<proteinExistence type="evidence at transcript level"/>
<gene>
    <name type="primary">nip7</name>
    <name type="ORF">zgc:110384</name>
</gene>
<feature type="chain" id="PRO_0000355567" description="60S ribosome subunit biogenesis protein NIP7 homolog">
    <location>
        <begin position="1"/>
        <end position="180"/>
    </location>
</feature>
<feature type="domain" description="PUA" evidence="2">
    <location>
        <begin position="94"/>
        <end position="170"/>
    </location>
</feature>
<feature type="region of interest" description="N-terminal domain" evidence="1">
    <location>
        <begin position="1"/>
        <end position="92"/>
    </location>
</feature>
<feature type="region of interest" description="C-terminal domain" evidence="1">
    <location>
        <begin position="93"/>
        <end position="180"/>
    </location>
</feature>
<name>NIP7_DANRE</name>